<gene>
    <name evidence="1" type="primary">tgt</name>
    <name type="ordered locus">KPN78578_03480</name>
    <name type="ORF">KPN_00357</name>
</gene>
<organism>
    <name type="scientific">Klebsiella pneumoniae subsp. pneumoniae (strain ATCC 700721 / MGH 78578)</name>
    <dbReference type="NCBI Taxonomy" id="272620"/>
    <lineage>
        <taxon>Bacteria</taxon>
        <taxon>Pseudomonadati</taxon>
        <taxon>Pseudomonadota</taxon>
        <taxon>Gammaproteobacteria</taxon>
        <taxon>Enterobacterales</taxon>
        <taxon>Enterobacteriaceae</taxon>
        <taxon>Klebsiella/Raoultella group</taxon>
        <taxon>Klebsiella</taxon>
        <taxon>Klebsiella pneumoniae complex</taxon>
    </lineage>
</organism>
<feature type="chain" id="PRO_1000016807" description="Queuine tRNA-ribosyltransferase">
    <location>
        <begin position="1"/>
        <end position="375"/>
    </location>
</feature>
<feature type="region of interest" description="RNA binding" evidence="1">
    <location>
        <begin position="245"/>
        <end position="251"/>
    </location>
</feature>
<feature type="region of interest" description="RNA binding; important for wobble base 34 recognition" evidence="1">
    <location>
        <begin position="269"/>
        <end position="273"/>
    </location>
</feature>
<feature type="active site" description="Proton acceptor" evidence="1">
    <location>
        <position position="89"/>
    </location>
</feature>
<feature type="active site" description="Nucleophile" evidence="1">
    <location>
        <position position="264"/>
    </location>
</feature>
<feature type="binding site" evidence="1">
    <location>
        <begin position="89"/>
        <end position="93"/>
    </location>
    <ligand>
        <name>substrate</name>
    </ligand>
</feature>
<feature type="binding site" evidence="1">
    <location>
        <position position="143"/>
    </location>
    <ligand>
        <name>substrate</name>
    </ligand>
</feature>
<feature type="binding site" evidence="1">
    <location>
        <position position="187"/>
    </location>
    <ligand>
        <name>substrate</name>
    </ligand>
</feature>
<feature type="binding site" evidence="1">
    <location>
        <position position="214"/>
    </location>
    <ligand>
        <name>substrate</name>
    </ligand>
</feature>
<feature type="binding site" evidence="1">
    <location>
        <position position="302"/>
    </location>
    <ligand>
        <name>Zn(2+)</name>
        <dbReference type="ChEBI" id="CHEBI:29105"/>
    </ligand>
</feature>
<feature type="binding site" evidence="1">
    <location>
        <position position="304"/>
    </location>
    <ligand>
        <name>Zn(2+)</name>
        <dbReference type="ChEBI" id="CHEBI:29105"/>
    </ligand>
</feature>
<feature type="binding site" evidence="1">
    <location>
        <position position="307"/>
    </location>
    <ligand>
        <name>Zn(2+)</name>
        <dbReference type="ChEBI" id="CHEBI:29105"/>
    </ligand>
</feature>
<feature type="binding site" evidence="1">
    <location>
        <position position="333"/>
    </location>
    <ligand>
        <name>Zn(2+)</name>
        <dbReference type="ChEBI" id="CHEBI:29105"/>
    </ligand>
</feature>
<dbReference type="EC" id="2.4.2.29" evidence="1"/>
<dbReference type="EMBL" id="CP000647">
    <property type="protein sequence ID" value="ABR75809.1"/>
    <property type="molecule type" value="Genomic_DNA"/>
</dbReference>
<dbReference type="RefSeq" id="WP_002890395.1">
    <property type="nucleotide sequence ID" value="NC_009648.1"/>
</dbReference>
<dbReference type="SMR" id="A6T5D8"/>
<dbReference type="STRING" id="272620.KPN_00357"/>
<dbReference type="PaxDb" id="272620-KPN_00357"/>
<dbReference type="EnsemblBacteria" id="ABR75809">
    <property type="protein sequence ID" value="ABR75809"/>
    <property type="gene ID" value="KPN_00357"/>
</dbReference>
<dbReference type="GeneID" id="93274742"/>
<dbReference type="KEGG" id="kpn:KPN_00357"/>
<dbReference type="HOGENOM" id="CLU_022060_0_1_6"/>
<dbReference type="UniPathway" id="UPA00392"/>
<dbReference type="Proteomes" id="UP000000265">
    <property type="component" value="Chromosome"/>
</dbReference>
<dbReference type="GO" id="GO:0005829">
    <property type="term" value="C:cytosol"/>
    <property type="evidence" value="ECO:0007669"/>
    <property type="project" value="TreeGrafter"/>
</dbReference>
<dbReference type="GO" id="GO:0046872">
    <property type="term" value="F:metal ion binding"/>
    <property type="evidence" value="ECO:0007669"/>
    <property type="project" value="UniProtKB-KW"/>
</dbReference>
<dbReference type="GO" id="GO:0008479">
    <property type="term" value="F:tRNA-guanosine(34) queuine transglycosylase activity"/>
    <property type="evidence" value="ECO:0007669"/>
    <property type="project" value="UniProtKB-UniRule"/>
</dbReference>
<dbReference type="GO" id="GO:0008616">
    <property type="term" value="P:queuosine biosynthetic process"/>
    <property type="evidence" value="ECO:0007669"/>
    <property type="project" value="UniProtKB-UniRule"/>
</dbReference>
<dbReference type="GO" id="GO:0002099">
    <property type="term" value="P:tRNA wobble guanine modification"/>
    <property type="evidence" value="ECO:0007669"/>
    <property type="project" value="TreeGrafter"/>
</dbReference>
<dbReference type="GO" id="GO:0101030">
    <property type="term" value="P:tRNA-guanine transglycosylation"/>
    <property type="evidence" value="ECO:0007669"/>
    <property type="project" value="InterPro"/>
</dbReference>
<dbReference type="FunFam" id="3.20.20.105:FF:000001">
    <property type="entry name" value="Queuine tRNA-ribosyltransferase"/>
    <property type="match status" value="1"/>
</dbReference>
<dbReference type="Gene3D" id="3.20.20.105">
    <property type="entry name" value="Queuine tRNA-ribosyltransferase-like"/>
    <property type="match status" value="1"/>
</dbReference>
<dbReference type="HAMAP" id="MF_00168">
    <property type="entry name" value="Q_tRNA_Tgt"/>
    <property type="match status" value="1"/>
</dbReference>
<dbReference type="InterPro" id="IPR050076">
    <property type="entry name" value="ArchSynthase1/Queuine_TRR"/>
</dbReference>
<dbReference type="InterPro" id="IPR004803">
    <property type="entry name" value="TGT"/>
</dbReference>
<dbReference type="InterPro" id="IPR036511">
    <property type="entry name" value="TGT-like_sf"/>
</dbReference>
<dbReference type="InterPro" id="IPR002616">
    <property type="entry name" value="tRNA_ribo_trans-like"/>
</dbReference>
<dbReference type="NCBIfam" id="TIGR00430">
    <property type="entry name" value="Q_tRNA_tgt"/>
    <property type="match status" value="1"/>
</dbReference>
<dbReference type="NCBIfam" id="TIGR00449">
    <property type="entry name" value="tgt_general"/>
    <property type="match status" value="1"/>
</dbReference>
<dbReference type="PANTHER" id="PTHR46499">
    <property type="entry name" value="QUEUINE TRNA-RIBOSYLTRANSFERASE"/>
    <property type="match status" value="1"/>
</dbReference>
<dbReference type="PANTHER" id="PTHR46499:SF1">
    <property type="entry name" value="QUEUINE TRNA-RIBOSYLTRANSFERASE"/>
    <property type="match status" value="1"/>
</dbReference>
<dbReference type="Pfam" id="PF01702">
    <property type="entry name" value="TGT"/>
    <property type="match status" value="1"/>
</dbReference>
<dbReference type="SUPFAM" id="SSF51713">
    <property type="entry name" value="tRNA-guanine transglycosylase"/>
    <property type="match status" value="1"/>
</dbReference>
<sequence length="375" mass="42568">MKFELDTTDGRARRGRLVFERGVVETPAFMPVGTYGTVKGMTPEEVEATGAQIILGNTFHLWLRPGQEIMKLHGDLHDFMQWKGPILTDSGGFQVFSLGDIRKITEQGVHFRNPINGDPIFLDPEKSMEIQYDLGSDIVMIFDECTPYPADWDYAKRSMEMSLRWAKRSRDRFDSLGNKNALFGIIQGSVYEDLRDISVKGLVEIGFDGYAVGGLAVGEPKEDMHRILEHVCPQIPADKPRYLMGVGKPEDLVEGVRRGIDMFDCVMPTRNARNGHLFVTDGVVKIRNAKHKSDTAPLDAECDCYTCRNYSRAYLHHLDRCNEILGARLNTIHNLRYYQRLMAGLRKAIEEGKLESFVTDFYQRQGRTVPPLNVD</sequence>
<proteinExistence type="inferred from homology"/>
<keyword id="KW-0328">Glycosyltransferase</keyword>
<keyword id="KW-0479">Metal-binding</keyword>
<keyword id="KW-0671">Queuosine biosynthesis</keyword>
<keyword id="KW-0808">Transferase</keyword>
<keyword id="KW-0819">tRNA processing</keyword>
<keyword id="KW-0862">Zinc</keyword>
<protein>
    <recommendedName>
        <fullName evidence="1">Queuine tRNA-ribosyltransferase</fullName>
        <ecNumber evidence="1">2.4.2.29</ecNumber>
    </recommendedName>
    <alternativeName>
        <fullName evidence="1">Guanine insertion enzyme</fullName>
    </alternativeName>
    <alternativeName>
        <fullName evidence="1">tRNA-guanine transglycosylase</fullName>
    </alternativeName>
</protein>
<accession>A6T5D8</accession>
<comment type="function">
    <text evidence="1">Catalyzes the base-exchange of a guanine (G) residue with the queuine precursor 7-aminomethyl-7-deazaguanine (PreQ1) at position 34 (anticodon wobble position) in tRNAs with GU(N) anticodons (tRNA-Asp, -Asn, -His and -Tyr). Catalysis occurs through a double-displacement mechanism. The nucleophile active site attacks the C1' of nucleotide 34 to detach the guanine base from the RNA, forming a covalent enzyme-RNA intermediate. The proton acceptor active site deprotonates the incoming PreQ1, allowing a nucleophilic attack on the C1' of the ribose to form the product. After dissociation, two additional enzymatic reactions on the tRNA convert PreQ1 to queuine (Q), resulting in the hypermodified nucleoside queuosine (7-(((4,5-cis-dihydroxy-2-cyclopenten-1-yl)amino)methyl)-7-deazaguanosine).</text>
</comment>
<comment type="catalytic activity">
    <reaction evidence="1">
        <text>7-aminomethyl-7-carbaguanine + guanosine(34) in tRNA = 7-aminomethyl-7-carbaguanosine(34) in tRNA + guanine</text>
        <dbReference type="Rhea" id="RHEA:24104"/>
        <dbReference type="Rhea" id="RHEA-COMP:10341"/>
        <dbReference type="Rhea" id="RHEA-COMP:10342"/>
        <dbReference type="ChEBI" id="CHEBI:16235"/>
        <dbReference type="ChEBI" id="CHEBI:58703"/>
        <dbReference type="ChEBI" id="CHEBI:74269"/>
        <dbReference type="ChEBI" id="CHEBI:82833"/>
        <dbReference type="EC" id="2.4.2.29"/>
    </reaction>
</comment>
<comment type="cofactor">
    <cofactor evidence="1">
        <name>Zn(2+)</name>
        <dbReference type="ChEBI" id="CHEBI:29105"/>
    </cofactor>
    <text evidence="1">Binds 1 zinc ion per subunit.</text>
</comment>
<comment type="pathway">
    <text evidence="1">tRNA modification; tRNA-queuosine biosynthesis.</text>
</comment>
<comment type="subunit">
    <text evidence="1">Homodimer. Within each dimer, one monomer is responsible for RNA recognition and catalysis, while the other monomer binds to the replacement base PreQ1.</text>
</comment>
<comment type="similarity">
    <text evidence="1">Belongs to the queuine tRNA-ribosyltransferase family.</text>
</comment>
<reference key="1">
    <citation type="submission" date="2006-09" db="EMBL/GenBank/DDBJ databases">
        <authorList>
            <consortium name="The Klebsiella pneumonia Genome Sequencing Project"/>
            <person name="McClelland M."/>
            <person name="Sanderson E.K."/>
            <person name="Spieth J."/>
            <person name="Clifton W.S."/>
            <person name="Latreille P."/>
            <person name="Sabo A."/>
            <person name="Pepin K."/>
            <person name="Bhonagiri V."/>
            <person name="Porwollik S."/>
            <person name="Ali J."/>
            <person name="Wilson R.K."/>
        </authorList>
    </citation>
    <scope>NUCLEOTIDE SEQUENCE [LARGE SCALE GENOMIC DNA]</scope>
    <source>
        <strain>ATCC 700721 / MGH 78578</strain>
    </source>
</reference>
<evidence type="ECO:0000255" key="1">
    <source>
        <dbReference type="HAMAP-Rule" id="MF_00168"/>
    </source>
</evidence>
<name>TGT_KLEP7</name>